<evidence type="ECO:0000250" key="1"/>
<evidence type="ECO:0000250" key="2">
    <source>
        <dbReference type="UniProtKB" id="A0KF84"/>
    </source>
</evidence>
<evidence type="ECO:0000250" key="3">
    <source>
        <dbReference type="UniProtKB" id="P42084"/>
    </source>
</evidence>
<evidence type="ECO:0000250" key="4">
    <source>
        <dbReference type="UniProtKB" id="Q8U8Z6"/>
    </source>
</evidence>
<evidence type="ECO:0000305" key="5"/>
<protein>
    <recommendedName>
        <fullName>Probable imidazolonepropionase</fullName>
        <ecNumber>3.5.2.7</ecNumber>
    </recommendedName>
    <alternativeName>
        <fullName>Amidohydrolase domain-containing protein 1</fullName>
    </alternativeName>
</protein>
<organism>
    <name type="scientific">Mus musculus</name>
    <name type="common">Mouse</name>
    <dbReference type="NCBI Taxonomy" id="10090"/>
    <lineage>
        <taxon>Eukaryota</taxon>
        <taxon>Metazoa</taxon>
        <taxon>Chordata</taxon>
        <taxon>Craniata</taxon>
        <taxon>Vertebrata</taxon>
        <taxon>Euteleostomi</taxon>
        <taxon>Mammalia</taxon>
        <taxon>Eutheria</taxon>
        <taxon>Euarchontoglires</taxon>
        <taxon>Glires</taxon>
        <taxon>Rodentia</taxon>
        <taxon>Myomorpha</taxon>
        <taxon>Muroidea</taxon>
        <taxon>Muridae</taxon>
        <taxon>Murinae</taxon>
        <taxon>Mus</taxon>
        <taxon>Mus</taxon>
    </lineage>
</organism>
<gene>
    <name type="primary">Amdhd1</name>
</gene>
<proteinExistence type="evidence at protein level"/>
<sequence length="426" mass="46489">MTSSHRLLLENAQQVVLVCARGERFLTGSALRSLAVLEGASVVVGTDGLIKAVGPAAVIQKQFSGETFEERIDCSGKCVLPGLVDAHTHPVWAGERVHEFAMKLAGATYMDIHQAGGGINFTVEHTRQASEEELFCSFQQRLQCMMRAGTTLVECKSGYGLNLETELKMLRVIERARRELHLSLSATYCGAHSVPKGKTAVEAADDIISHHLPRLKELSRNGDLHVDNIDVFCEKGVFDLDTTRRILEGGKKMGLQINFHGDELHPMKAAELGAELGAQAISHLEEVSDEGIAAMAAARCSAVLLPTTAYMLRLKQPRARKMLDEGVIVALGSDFNPNAYCFSMPMVMHLACVNMRMSMPEALAAATINAAYALGKSHTHGSLEVGKQGDAIIINASRWEHLIYQFGGHHELIDYVITKGKVIYKK</sequence>
<dbReference type="EC" id="3.5.2.7"/>
<dbReference type="EMBL" id="AK005066">
    <property type="protein sequence ID" value="BAB23790.1"/>
    <property type="molecule type" value="mRNA"/>
</dbReference>
<dbReference type="EMBL" id="BC022626">
    <property type="protein sequence ID" value="AAH22626.1"/>
    <property type="molecule type" value="mRNA"/>
</dbReference>
<dbReference type="EMBL" id="BC043681">
    <property type="protein sequence ID" value="AAH43681.1"/>
    <property type="molecule type" value="mRNA"/>
</dbReference>
<dbReference type="EMBL" id="BC055025">
    <property type="protein sequence ID" value="AAH55025.1"/>
    <property type="molecule type" value="mRNA"/>
</dbReference>
<dbReference type="EMBL" id="BC118616">
    <property type="protein sequence ID" value="AAI18617.1"/>
    <property type="molecule type" value="mRNA"/>
</dbReference>
<dbReference type="EMBL" id="BC121826">
    <property type="protein sequence ID" value="AAI21827.1"/>
    <property type="molecule type" value="mRNA"/>
</dbReference>
<dbReference type="CCDS" id="CCDS48671.1"/>
<dbReference type="RefSeq" id="NP_082184.1">
    <property type="nucleotide sequence ID" value="NM_027908.1"/>
</dbReference>
<dbReference type="SMR" id="Q9DBA8"/>
<dbReference type="FunCoup" id="Q9DBA8">
    <property type="interactions" value="33"/>
</dbReference>
<dbReference type="STRING" id="10090.ENSMUSP00000016034"/>
<dbReference type="MEROPS" id="M38.980"/>
<dbReference type="GlyGen" id="Q9DBA8">
    <property type="glycosylation" value="1 site, 1 O-linked glycan (1 site)"/>
</dbReference>
<dbReference type="iPTMnet" id="Q9DBA8"/>
<dbReference type="PhosphoSitePlus" id="Q9DBA8"/>
<dbReference type="SwissPalm" id="Q9DBA8"/>
<dbReference type="jPOST" id="Q9DBA8"/>
<dbReference type="PaxDb" id="10090-ENSMUSP00000016034"/>
<dbReference type="PeptideAtlas" id="Q9DBA8"/>
<dbReference type="ProteomicsDB" id="273207"/>
<dbReference type="Antibodypedia" id="30145">
    <property type="antibodies" value="130 antibodies from 18 providers"/>
</dbReference>
<dbReference type="DNASU" id="71761"/>
<dbReference type="Ensembl" id="ENSMUST00000016034.3">
    <property type="protein sequence ID" value="ENSMUSP00000016034.3"/>
    <property type="gene ID" value="ENSMUSG00000015890.3"/>
</dbReference>
<dbReference type="GeneID" id="71761"/>
<dbReference type="KEGG" id="mmu:71761"/>
<dbReference type="UCSC" id="uc007gut.2">
    <property type="organism name" value="mouse"/>
</dbReference>
<dbReference type="AGR" id="MGI:1919011"/>
<dbReference type="CTD" id="144193"/>
<dbReference type="MGI" id="MGI:1919011">
    <property type="gene designation" value="Amdhd1"/>
</dbReference>
<dbReference type="VEuPathDB" id="HostDB:ENSMUSG00000015890"/>
<dbReference type="eggNOG" id="KOG3968">
    <property type="taxonomic scope" value="Eukaryota"/>
</dbReference>
<dbReference type="GeneTree" id="ENSGT00390000008645"/>
<dbReference type="HOGENOM" id="CLU_041647_2_0_1"/>
<dbReference type="InParanoid" id="Q9DBA8"/>
<dbReference type="OMA" id="CAPHARW"/>
<dbReference type="OrthoDB" id="194468at2759"/>
<dbReference type="PhylomeDB" id="Q9DBA8"/>
<dbReference type="TreeFam" id="TF312878"/>
<dbReference type="Reactome" id="R-MMU-70921">
    <property type="pathway name" value="Histidine catabolism"/>
</dbReference>
<dbReference type="UniPathway" id="UPA00379">
    <property type="reaction ID" value="UER00551"/>
</dbReference>
<dbReference type="BioGRID-ORCS" id="71761">
    <property type="hits" value="3 hits in 78 CRISPR screens"/>
</dbReference>
<dbReference type="ChiTaRS" id="Amdhd1">
    <property type="organism name" value="mouse"/>
</dbReference>
<dbReference type="PRO" id="PR:Q9DBA8"/>
<dbReference type="Proteomes" id="UP000000589">
    <property type="component" value="Chromosome 10"/>
</dbReference>
<dbReference type="RNAct" id="Q9DBA8">
    <property type="molecule type" value="protein"/>
</dbReference>
<dbReference type="Bgee" id="ENSMUSG00000015890">
    <property type="expression patterns" value="Expressed in left lobe of liver and 21 other cell types or tissues"/>
</dbReference>
<dbReference type="GO" id="GO:0005737">
    <property type="term" value="C:cytoplasm"/>
    <property type="evidence" value="ECO:0007669"/>
    <property type="project" value="InterPro"/>
</dbReference>
<dbReference type="GO" id="GO:0050480">
    <property type="term" value="F:imidazolonepropionase activity"/>
    <property type="evidence" value="ECO:0007669"/>
    <property type="project" value="UniProtKB-EC"/>
</dbReference>
<dbReference type="GO" id="GO:0046872">
    <property type="term" value="F:metal ion binding"/>
    <property type="evidence" value="ECO:0007669"/>
    <property type="project" value="UniProtKB-KW"/>
</dbReference>
<dbReference type="GO" id="GO:0019556">
    <property type="term" value="P:L-histidine catabolic process to glutamate and formamide"/>
    <property type="evidence" value="ECO:0007669"/>
    <property type="project" value="UniProtKB-UniPathway"/>
</dbReference>
<dbReference type="GO" id="GO:0019557">
    <property type="term" value="P:L-histidine catabolic process to glutamate and formate"/>
    <property type="evidence" value="ECO:0007669"/>
    <property type="project" value="UniProtKB-UniPathway"/>
</dbReference>
<dbReference type="CDD" id="cd01296">
    <property type="entry name" value="Imidazolone-5PH"/>
    <property type="match status" value="1"/>
</dbReference>
<dbReference type="FunFam" id="3.20.20.140:FF:000007">
    <property type="entry name" value="Imidazolonepropionase"/>
    <property type="match status" value="1"/>
</dbReference>
<dbReference type="Gene3D" id="3.20.20.140">
    <property type="entry name" value="Metal-dependent hydrolases"/>
    <property type="match status" value="1"/>
</dbReference>
<dbReference type="Gene3D" id="2.30.40.10">
    <property type="entry name" value="Urease, subunit C, domain 1"/>
    <property type="match status" value="1"/>
</dbReference>
<dbReference type="InterPro" id="IPR006680">
    <property type="entry name" value="Amidohydro-rel"/>
</dbReference>
<dbReference type="InterPro" id="IPR005920">
    <property type="entry name" value="HutI"/>
</dbReference>
<dbReference type="InterPro" id="IPR011059">
    <property type="entry name" value="Metal-dep_hydrolase_composite"/>
</dbReference>
<dbReference type="InterPro" id="IPR032466">
    <property type="entry name" value="Metal_Hydrolase"/>
</dbReference>
<dbReference type="NCBIfam" id="TIGR01224">
    <property type="entry name" value="hutI"/>
    <property type="match status" value="1"/>
</dbReference>
<dbReference type="PANTHER" id="PTHR42752">
    <property type="entry name" value="IMIDAZOLONEPROPIONASE"/>
    <property type="match status" value="1"/>
</dbReference>
<dbReference type="PANTHER" id="PTHR42752:SF1">
    <property type="entry name" value="IMIDAZOLONEPROPIONASE-RELATED"/>
    <property type="match status" value="1"/>
</dbReference>
<dbReference type="Pfam" id="PF01979">
    <property type="entry name" value="Amidohydro_1"/>
    <property type="match status" value="1"/>
</dbReference>
<dbReference type="SUPFAM" id="SSF51338">
    <property type="entry name" value="Composite domain of metallo-dependent hydrolases"/>
    <property type="match status" value="1"/>
</dbReference>
<dbReference type="SUPFAM" id="SSF51556">
    <property type="entry name" value="Metallo-dependent hydrolases"/>
    <property type="match status" value="1"/>
</dbReference>
<keyword id="KW-0369">Histidine metabolism</keyword>
<keyword id="KW-0378">Hydrolase</keyword>
<keyword id="KW-0408">Iron</keyword>
<keyword id="KW-0479">Metal-binding</keyword>
<keyword id="KW-1185">Reference proteome</keyword>
<keyword id="KW-0862">Zinc</keyword>
<name>HUTI_MOUSE</name>
<accession>Q9DBA8</accession>
<accession>Q7TPP5</accession>
<accession>Q811K3</accession>
<accession>Q8R230</accession>
<comment type="catalytic activity">
    <reaction>
        <text>4-imidazolone-5-propanoate + H2O = N-formimidoyl-L-glutamate</text>
        <dbReference type="Rhea" id="RHEA:23660"/>
        <dbReference type="ChEBI" id="CHEBI:15377"/>
        <dbReference type="ChEBI" id="CHEBI:58928"/>
        <dbReference type="ChEBI" id="CHEBI:77893"/>
        <dbReference type="EC" id="3.5.2.7"/>
    </reaction>
</comment>
<comment type="cofactor">
    <cofactor evidence="1">
        <name>Zn(2+)</name>
        <dbReference type="ChEBI" id="CHEBI:29105"/>
    </cofactor>
    <cofactor evidence="1">
        <name>Fe(3+)</name>
        <dbReference type="ChEBI" id="CHEBI:29034"/>
    </cofactor>
    <text evidence="1">Binds 1 zinc or iron ion per subunit.</text>
</comment>
<comment type="pathway">
    <text>Amino-acid degradation; L-histidine degradation into L-glutamate; N-formimidoyl-L-glutamate from L-histidine: step 3/3.</text>
</comment>
<comment type="similarity">
    <text evidence="5">Belongs to the metallo-dependent hydrolases superfamily. HutI family.</text>
</comment>
<feature type="chain" id="PRO_0000282583" description="Probable imidazolonepropionase">
    <location>
        <begin position="1"/>
        <end position="426"/>
    </location>
</feature>
<feature type="binding site" evidence="3">
    <location>
        <position position="159"/>
    </location>
    <ligand>
        <name>4-imidazolone-5-propanoate</name>
        <dbReference type="ChEBI" id="CHEBI:77893"/>
    </ligand>
</feature>
<feature type="binding site" evidence="4">
    <location>
        <position position="159"/>
    </location>
    <ligand>
        <name>N-formimidoyl-L-glutamate</name>
        <dbReference type="ChEBI" id="CHEBI:58928"/>
    </ligand>
</feature>
<feature type="binding site" evidence="3">
    <location>
        <position position="192"/>
    </location>
    <ligand>
        <name>4-imidazolone-5-propanoate</name>
        <dbReference type="ChEBI" id="CHEBI:77893"/>
    </ligand>
</feature>
<feature type="binding site" evidence="2">
    <location>
        <position position="260"/>
    </location>
    <ligand>
        <name>Fe(3+)</name>
        <dbReference type="ChEBI" id="CHEBI:29034"/>
    </ligand>
</feature>
<feature type="binding site" evidence="3">
    <location>
        <position position="260"/>
    </location>
    <ligand>
        <name>Zn(2+)</name>
        <dbReference type="ChEBI" id="CHEBI:29105"/>
    </ligand>
</feature>
<feature type="binding site" evidence="3">
    <location>
        <position position="263"/>
    </location>
    <ligand>
        <name>4-imidazolone-5-propanoate</name>
        <dbReference type="ChEBI" id="CHEBI:77893"/>
    </ligand>
</feature>
<feature type="binding site" evidence="2">
    <location>
        <position position="334"/>
    </location>
    <ligand>
        <name>Fe(3+)</name>
        <dbReference type="ChEBI" id="CHEBI:29034"/>
    </ligand>
</feature>
<feature type="binding site" evidence="3">
    <location>
        <position position="334"/>
    </location>
    <ligand>
        <name>Zn(2+)</name>
        <dbReference type="ChEBI" id="CHEBI:29105"/>
    </ligand>
</feature>
<feature type="binding site" evidence="4">
    <location>
        <position position="336"/>
    </location>
    <ligand>
        <name>N-formimidoyl-L-glutamate</name>
        <dbReference type="ChEBI" id="CHEBI:58928"/>
    </ligand>
</feature>
<reference key="1">
    <citation type="journal article" date="2005" name="Science">
        <title>The transcriptional landscape of the mammalian genome.</title>
        <authorList>
            <person name="Carninci P."/>
            <person name="Kasukawa T."/>
            <person name="Katayama S."/>
            <person name="Gough J."/>
            <person name="Frith M.C."/>
            <person name="Maeda N."/>
            <person name="Oyama R."/>
            <person name="Ravasi T."/>
            <person name="Lenhard B."/>
            <person name="Wells C."/>
            <person name="Kodzius R."/>
            <person name="Shimokawa K."/>
            <person name="Bajic V.B."/>
            <person name="Brenner S.E."/>
            <person name="Batalov S."/>
            <person name="Forrest A.R."/>
            <person name="Zavolan M."/>
            <person name="Davis M.J."/>
            <person name="Wilming L.G."/>
            <person name="Aidinis V."/>
            <person name="Allen J.E."/>
            <person name="Ambesi-Impiombato A."/>
            <person name="Apweiler R."/>
            <person name="Aturaliya R.N."/>
            <person name="Bailey T.L."/>
            <person name="Bansal M."/>
            <person name="Baxter L."/>
            <person name="Beisel K.W."/>
            <person name="Bersano T."/>
            <person name="Bono H."/>
            <person name="Chalk A.M."/>
            <person name="Chiu K.P."/>
            <person name="Choudhary V."/>
            <person name="Christoffels A."/>
            <person name="Clutterbuck D.R."/>
            <person name="Crowe M.L."/>
            <person name="Dalla E."/>
            <person name="Dalrymple B.P."/>
            <person name="de Bono B."/>
            <person name="Della Gatta G."/>
            <person name="di Bernardo D."/>
            <person name="Down T."/>
            <person name="Engstrom P."/>
            <person name="Fagiolini M."/>
            <person name="Faulkner G."/>
            <person name="Fletcher C.F."/>
            <person name="Fukushima T."/>
            <person name="Furuno M."/>
            <person name="Futaki S."/>
            <person name="Gariboldi M."/>
            <person name="Georgii-Hemming P."/>
            <person name="Gingeras T.R."/>
            <person name="Gojobori T."/>
            <person name="Green R.E."/>
            <person name="Gustincich S."/>
            <person name="Harbers M."/>
            <person name="Hayashi Y."/>
            <person name="Hensch T.K."/>
            <person name="Hirokawa N."/>
            <person name="Hill D."/>
            <person name="Huminiecki L."/>
            <person name="Iacono M."/>
            <person name="Ikeo K."/>
            <person name="Iwama A."/>
            <person name="Ishikawa T."/>
            <person name="Jakt M."/>
            <person name="Kanapin A."/>
            <person name="Katoh M."/>
            <person name="Kawasawa Y."/>
            <person name="Kelso J."/>
            <person name="Kitamura H."/>
            <person name="Kitano H."/>
            <person name="Kollias G."/>
            <person name="Krishnan S.P."/>
            <person name="Kruger A."/>
            <person name="Kummerfeld S.K."/>
            <person name="Kurochkin I.V."/>
            <person name="Lareau L.F."/>
            <person name="Lazarevic D."/>
            <person name="Lipovich L."/>
            <person name="Liu J."/>
            <person name="Liuni S."/>
            <person name="McWilliam S."/>
            <person name="Madan Babu M."/>
            <person name="Madera M."/>
            <person name="Marchionni L."/>
            <person name="Matsuda H."/>
            <person name="Matsuzawa S."/>
            <person name="Miki H."/>
            <person name="Mignone F."/>
            <person name="Miyake S."/>
            <person name="Morris K."/>
            <person name="Mottagui-Tabar S."/>
            <person name="Mulder N."/>
            <person name="Nakano N."/>
            <person name="Nakauchi H."/>
            <person name="Ng P."/>
            <person name="Nilsson R."/>
            <person name="Nishiguchi S."/>
            <person name="Nishikawa S."/>
            <person name="Nori F."/>
            <person name="Ohara O."/>
            <person name="Okazaki Y."/>
            <person name="Orlando V."/>
            <person name="Pang K.C."/>
            <person name="Pavan W.J."/>
            <person name="Pavesi G."/>
            <person name="Pesole G."/>
            <person name="Petrovsky N."/>
            <person name="Piazza S."/>
            <person name="Reed J."/>
            <person name="Reid J.F."/>
            <person name="Ring B.Z."/>
            <person name="Ringwald M."/>
            <person name="Rost B."/>
            <person name="Ruan Y."/>
            <person name="Salzberg S.L."/>
            <person name="Sandelin A."/>
            <person name="Schneider C."/>
            <person name="Schoenbach C."/>
            <person name="Sekiguchi K."/>
            <person name="Semple C.A."/>
            <person name="Seno S."/>
            <person name="Sessa L."/>
            <person name="Sheng Y."/>
            <person name="Shibata Y."/>
            <person name="Shimada H."/>
            <person name="Shimada K."/>
            <person name="Silva D."/>
            <person name="Sinclair B."/>
            <person name="Sperling S."/>
            <person name="Stupka E."/>
            <person name="Sugiura K."/>
            <person name="Sultana R."/>
            <person name="Takenaka Y."/>
            <person name="Taki K."/>
            <person name="Tammoja K."/>
            <person name="Tan S.L."/>
            <person name="Tang S."/>
            <person name="Taylor M.S."/>
            <person name="Tegner J."/>
            <person name="Teichmann S.A."/>
            <person name="Ueda H.R."/>
            <person name="van Nimwegen E."/>
            <person name="Verardo R."/>
            <person name="Wei C.L."/>
            <person name="Yagi K."/>
            <person name="Yamanishi H."/>
            <person name="Zabarovsky E."/>
            <person name="Zhu S."/>
            <person name="Zimmer A."/>
            <person name="Hide W."/>
            <person name="Bult C."/>
            <person name="Grimmond S.M."/>
            <person name="Teasdale R.D."/>
            <person name="Liu E.T."/>
            <person name="Brusic V."/>
            <person name="Quackenbush J."/>
            <person name="Wahlestedt C."/>
            <person name="Mattick J.S."/>
            <person name="Hume D.A."/>
            <person name="Kai C."/>
            <person name="Sasaki D."/>
            <person name="Tomaru Y."/>
            <person name="Fukuda S."/>
            <person name="Kanamori-Katayama M."/>
            <person name="Suzuki M."/>
            <person name="Aoki J."/>
            <person name="Arakawa T."/>
            <person name="Iida J."/>
            <person name="Imamura K."/>
            <person name="Itoh M."/>
            <person name="Kato T."/>
            <person name="Kawaji H."/>
            <person name="Kawagashira N."/>
            <person name="Kawashima T."/>
            <person name="Kojima M."/>
            <person name="Kondo S."/>
            <person name="Konno H."/>
            <person name="Nakano K."/>
            <person name="Ninomiya N."/>
            <person name="Nishio T."/>
            <person name="Okada M."/>
            <person name="Plessy C."/>
            <person name="Shibata K."/>
            <person name="Shiraki T."/>
            <person name="Suzuki S."/>
            <person name="Tagami M."/>
            <person name="Waki K."/>
            <person name="Watahiki A."/>
            <person name="Okamura-Oho Y."/>
            <person name="Suzuki H."/>
            <person name="Kawai J."/>
            <person name="Hayashizaki Y."/>
        </authorList>
    </citation>
    <scope>NUCLEOTIDE SEQUENCE [LARGE SCALE MRNA]</scope>
    <source>
        <strain>C57BL/6J</strain>
        <tissue>Liver</tissue>
    </source>
</reference>
<reference key="2">
    <citation type="journal article" date="2004" name="Genome Res.">
        <title>The status, quality, and expansion of the NIH full-length cDNA project: the Mammalian Gene Collection (MGC).</title>
        <authorList>
            <consortium name="The MGC Project Team"/>
        </authorList>
    </citation>
    <scope>NUCLEOTIDE SEQUENCE [LARGE SCALE MRNA]</scope>
    <source>
        <strain>FVB/N</strain>
        <tissue>Liver</tissue>
    </source>
</reference>
<reference key="3">
    <citation type="journal article" date="2010" name="Cell">
        <title>A tissue-specific atlas of mouse protein phosphorylation and expression.</title>
        <authorList>
            <person name="Huttlin E.L."/>
            <person name="Jedrychowski M.P."/>
            <person name="Elias J.E."/>
            <person name="Goswami T."/>
            <person name="Rad R."/>
            <person name="Beausoleil S.A."/>
            <person name="Villen J."/>
            <person name="Haas W."/>
            <person name="Sowa M.E."/>
            <person name="Gygi S.P."/>
        </authorList>
    </citation>
    <scope>IDENTIFICATION BY MASS SPECTROMETRY [LARGE SCALE ANALYSIS]</scope>
    <source>
        <tissue>Liver</tissue>
    </source>
</reference>